<evidence type="ECO:0000305" key="1"/>
<accession>P75572</accession>
<sequence>MKEKTPFKNEKEFHEMVKKTKKGTFSGWYIIDKDNNSVEFSGKFNRQFKLNKPVITVNTEYVTRKELNEYKDSNDQRLTKIETTLAAQGEQINKLTQTVEKQGEQIRELQVEQKAQGEQIKAQGETLKLILQTLQKMSDRLDKIDPSK</sequence>
<dbReference type="EMBL" id="U00089">
    <property type="protein sequence ID" value="AAB96275.1"/>
    <property type="molecule type" value="Genomic_DNA"/>
</dbReference>
<dbReference type="PIR" id="S73953">
    <property type="entry name" value="S73953"/>
</dbReference>
<dbReference type="RefSeq" id="NP_109892.1">
    <property type="nucleotide sequence ID" value="NC_000912.1"/>
</dbReference>
<dbReference type="RefSeq" id="WP_010874561.1">
    <property type="nucleotide sequence ID" value="NZ_OU342337.1"/>
</dbReference>
<dbReference type="SMR" id="P75572"/>
<dbReference type="IntAct" id="P75572">
    <property type="interactions" value="2"/>
</dbReference>
<dbReference type="STRING" id="272634.MPN_204"/>
<dbReference type="EnsemblBacteria" id="AAB96275">
    <property type="protein sequence ID" value="AAB96275"/>
    <property type="gene ID" value="MPN_204"/>
</dbReference>
<dbReference type="KEGG" id="mpn:MPN_204"/>
<dbReference type="PATRIC" id="fig|272634.6.peg.224"/>
<dbReference type="HOGENOM" id="CLU_137918_0_0_14"/>
<dbReference type="BioCyc" id="MPNE272634:G1GJ3-330-MONOMER"/>
<dbReference type="Proteomes" id="UP000000808">
    <property type="component" value="Chromosome"/>
</dbReference>
<dbReference type="Gene3D" id="6.10.250.40">
    <property type="match status" value="1"/>
</dbReference>
<dbReference type="InterPro" id="IPR002862">
    <property type="entry name" value="DUF16"/>
</dbReference>
<dbReference type="Pfam" id="PF01519">
    <property type="entry name" value="DUF16"/>
    <property type="match status" value="1"/>
</dbReference>
<dbReference type="SUPFAM" id="SSF144266">
    <property type="entry name" value="MPN010-like"/>
    <property type="match status" value="1"/>
</dbReference>
<proteinExistence type="inferred from homology"/>
<comment type="similarity">
    <text evidence="1">Belongs to the UPF0134 family.</text>
</comment>
<name>Y204_MYCPN</name>
<gene>
    <name type="ordered locus">MPN_204</name>
    <name type="ORF">GT9_orf148</name>
    <name type="ORF">MP627</name>
</gene>
<protein>
    <recommendedName>
        <fullName>UPF0134 protein MPN_204</fullName>
    </recommendedName>
</protein>
<keyword id="KW-1185">Reference proteome</keyword>
<feature type="chain" id="PRO_0000221603" description="UPF0134 protein MPN_204">
    <location>
        <begin position="1"/>
        <end position="148"/>
    </location>
</feature>
<organism>
    <name type="scientific">Mycoplasma pneumoniae (strain ATCC 29342 / M129 / Subtype 1)</name>
    <name type="common">Mycoplasmoides pneumoniae</name>
    <dbReference type="NCBI Taxonomy" id="272634"/>
    <lineage>
        <taxon>Bacteria</taxon>
        <taxon>Bacillati</taxon>
        <taxon>Mycoplasmatota</taxon>
        <taxon>Mycoplasmoidales</taxon>
        <taxon>Mycoplasmoidaceae</taxon>
        <taxon>Mycoplasmoides</taxon>
    </lineage>
</organism>
<reference key="1">
    <citation type="journal article" date="1996" name="Nucleic Acids Res.">
        <title>Complete sequence analysis of the genome of the bacterium Mycoplasma pneumoniae.</title>
        <authorList>
            <person name="Himmelreich R."/>
            <person name="Hilbert H."/>
            <person name="Plagens H."/>
            <person name="Pirkl E."/>
            <person name="Li B.-C."/>
            <person name="Herrmann R."/>
        </authorList>
    </citation>
    <scope>NUCLEOTIDE SEQUENCE [LARGE SCALE GENOMIC DNA]</scope>
    <source>
        <strain>ATCC 29342 / M129 / Subtype 1</strain>
    </source>
</reference>